<name>ANM9_XENLA</name>
<organism>
    <name type="scientific">Xenopus laevis</name>
    <name type="common">African clawed frog</name>
    <dbReference type="NCBI Taxonomy" id="8355"/>
    <lineage>
        <taxon>Eukaryota</taxon>
        <taxon>Metazoa</taxon>
        <taxon>Chordata</taxon>
        <taxon>Craniata</taxon>
        <taxon>Vertebrata</taxon>
        <taxon>Euteleostomi</taxon>
        <taxon>Amphibia</taxon>
        <taxon>Batrachia</taxon>
        <taxon>Anura</taxon>
        <taxon>Pipoidea</taxon>
        <taxon>Pipidae</taxon>
        <taxon>Xenopodinae</taxon>
        <taxon>Xenopus</taxon>
        <taxon>Xenopus</taxon>
    </lineage>
</organism>
<reference key="1">
    <citation type="submission" date="2006-10" db="EMBL/GenBank/DDBJ databases">
        <authorList>
            <consortium name="NIH - Xenopus Gene Collection (XGC) project"/>
        </authorList>
    </citation>
    <scope>NUCLEOTIDE SEQUENCE [LARGE SCALE MRNA]</scope>
    <source>
        <tissue>Ovary</tissue>
    </source>
</reference>
<protein>
    <recommendedName>
        <fullName>Protein arginine N-methyltransferase 9</fullName>
    </recommendedName>
    <alternativeName>
        <fullName>Protein arginine N-methyltransferase 10</fullName>
        <ecNumber evidence="1">2.1.1.320</ecNumber>
    </alternativeName>
</protein>
<feature type="chain" id="PRO_0000325931" description="Protein arginine N-methyltransferase 9">
    <location>
        <begin position="1"/>
        <end position="827"/>
    </location>
</feature>
<feature type="repeat" description="TPR 1">
    <location>
        <begin position="54"/>
        <end position="87"/>
    </location>
</feature>
<feature type="repeat" description="TPR 2">
    <location>
        <begin position="88"/>
        <end position="121"/>
    </location>
</feature>
<feature type="domain" description="SAM-dependent MTase PRMT-type 1" evidence="2">
    <location>
        <begin position="124"/>
        <end position="453"/>
    </location>
</feature>
<feature type="domain" description="SAM-dependent MTase PRMT-type 2" evidence="2">
    <location>
        <begin position="511"/>
        <end position="827"/>
    </location>
</feature>
<keyword id="KW-0963">Cytoplasm</keyword>
<keyword id="KW-0489">Methyltransferase</keyword>
<keyword id="KW-1185">Reference proteome</keyword>
<keyword id="KW-0677">Repeat</keyword>
<keyword id="KW-0949">S-adenosyl-L-methionine</keyword>
<keyword id="KW-0802">TPR repeat</keyword>
<keyword id="KW-0808">Transferase</keyword>
<evidence type="ECO:0000250" key="1">
    <source>
        <dbReference type="UniProtKB" id="Q6P2P2"/>
    </source>
</evidence>
<evidence type="ECO:0000255" key="2">
    <source>
        <dbReference type="PROSITE-ProRule" id="PRU01015"/>
    </source>
</evidence>
<gene>
    <name type="primary">prmt9</name>
    <name type="synonym">prmt10</name>
</gene>
<sequence>MAGQAASKRRLISRSLQSADICLQHQDYGTAYAHLLLVLTLAPEQKEALKEMFQYSLFKWAEELYALNRSQDLFNCYEQALELFPIDDVICNSMGEHLFRLGFRDEAAGYFYKALKLNPSSAEAKENFYRVANWLIERWHFIMLNDTKRNLMYRAAIQNAIQNGCKTVLDIGTGTGILSMFAKKAGAPFVYACELSKTMYELACEIVTANQMDGHIKLLHMKSHDIQIPEHIPERVSLVVTETVDAGLFGEGIVETLIHAWKNLLLQPKPKDGRVEAYGKVIPSSAVIYGMAVECPEIRRHYSVGVTEVAGIKLGDAVKFCSPIHSSHGPDDVTEPYTTEKMSRVPGGYKALSQPFQVMTVDFNSLQALEYIASGKSNRISVPVYQQGQFDCFITWFALQLDNEHSLSTEPSEETCWEQAVFPVQKLPDEGCLVNTGDTIVVDVSCPDCYLRLDLSTIVLSESSCDQTENMVMGNETDICDALANLHTTTNKGNMQELCILEPGEIALLNNAVYHESFMAAISKVIGSLELKESCSVVRNSQEQDVNFAQPVSEDRLHVLDVSEGFSILPLIAAKLGKVKAFSSVEKEQHRVALEKLSVINDLNNNESLEFCLSQLETDDGAAQKPKSDKMWSIIILDVIETCGLIRQDLLEKAAIARCLLEPGGKIFPHAVVMQGMLIESKTLLHEGSVQGNEPTLGFLIAPFINRFKVPAHVFLNLSTVPCIPLSEQFELLRLDLMNPCSNNQSSSVMRIKVNICRSGQVTAVTFWYHIHIDEAISLDTSSEASHWKQAAYVLETPTCVLEGEELLLEVQFQNSSMSMKLTRPLQ</sequence>
<proteinExistence type="evidence at transcript level"/>
<accession>A0JMU5</accession>
<dbReference type="EC" id="2.1.1.320" evidence="1"/>
<dbReference type="EMBL" id="BC126010">
    <property type="protein sequence ID" value="AAI26011.1"/>
    <property type="molecule type" value="mRNA"/>
</dbReference>
<dbReference type="RefSeq" id="NP_001090430.1">
    <property type="nucleotide sequence ID" value="NM_001096961.1"/>
</dbReference>
<dbReference type="RefSeq" id="XP_018106530.1">
    <property type="nucleotide sequence ID" value="XM_018251041.1"/>
</dbReference>
<dbReference type="SMR" id="A0JMU5"/>
<dbReference type="DNASU" id="779342"/>
<dbReference type="GeneID" id="779342"/>
<dbReference type="KEGG" id="xla:779342"/>
<dbReference type="AGR" id="Xenbase:XB-GENE-5998467"/>
<dbReference type="CTD" id="779342"/>
<dbReference type="Xenbase" id="XB-GENE-5998467">
    <property type="gene designation" value="prmt9.L"/>
</dbReference>
<dbReference type="OMA" id="CQNEMSS"/>
<dbReference type="OrthoDB" id="5980806at2759"/>
<dbReference type="Proteomes" id="UP000186698">
    <property type="component" value="Chromosome 1L"/>
</dbReference>
<dbReference type="Bgee" id="779342">
    <property type="expression patterns" value="Expressed in egg cell and 19 other cell types or tissues"/>
</dbReference>
<dbReference type="GO" id="GO:0005737">
    <property type="term" value="C:cytoplasm"/>
    <property type="evidence" value="ECO:0000250"/>
    <property type="project" value="UniProtKB"/>
</dbReference>
<dbReference type="GO" id="GO:0005634">
    <property type="term" value="C:nucleus"/>
    <property type="evidence" value="ECO:0000318"/>
    <property type="project" value="GO_Central"/>
</dbReference>
<dbReference type="GO" id="GO:0042054">
    <property type="term" value="F:histone methyltransferase activity"/>
    <property type="evidence" value="ECO:0000318"/>
    <property type="project" value="GO_Central"/>
</dbReference>
<dbReference type="GO" id="GO:0016274">
    <property type="term" value="F:protein-arginine N-methyltransferase activity"/>
    <property type="evidence" value="ECO:0000250"/>
    <property type="project" value="UniProtKB"/>
</dbReference>
<dbReference type="GO" id="GO:0035243">
    <property type="term" value="F:protein-arginine omega-N symmetric methyltransferase activity"/>
    <property type="evidence" value="ECO:0007669"/>
    <property type="project" value="UniProtKB-EC"/>
</dbReference>
<dbReference type="GO" id="GO:0006338">
    <property type="term" value="P:chromatin remodeling"/>
    <property type="evidence" value="ECO:0000318"/>
    <property type="project" value="GO_Central"/>
</dbReference>
<dbReference type="GO" id="GO:0032259">
    <property type="term" value="P:methylation"/>
    <property type="evidence" value="ECO:0007669"/>
    <property type="project" value="UniProtKB-KW"/>
</dbReference>
<dbReference type="GO" id="GO:0006397">
    <property type="term" value="P:mRNA processing"/>
    <property type="evidence" value="ECO:0000250"/>
    <property type="project" value="UniProtKB"/>
</dbReference>
<dbReference type="GO" id="GO:0006355">
    <property type="term" value="P:regulation of DNA-templated transcription"/>
    <property type="evidence" value="ECO:0000318"/>
    <property type="project" value="GO_Central"/>
</dbReference>
<dbReference type="CDD" id="cd02440">
    <property type="entry name" value="AdoMet_MTases"/>
    <property type="match status" value="1"/>
</dbReference>
<dbReference type="FunFam" id="1.25.40.10:FF:000138">
    <property type="entry name" value="Protein arginine methyltransferase 9"/>
    <property type="match status" value="1"/>
</dbReference>
<dbReference type="FunFam" id="2.70.160.11:FF:000006">
    <property type="entry name" value="Protein arginine methyltransferase 9"/>
    <property type="match status" value="1"/>
</dbReference>
<dbReference type="FunFam" id="3.40.50.150:FF:000078">
    <property type="entry name" value="Protein arginine methyltransferase 9"/>
    <property type="match status" value="1"/>
</dbReference>
<dbReference type="FunFam" id="3.40.50.150:FF:000384">
    <property type="entry name" value="Protein arginine methyltransferase 9"/>
    <property type="match status" value="1"/>
</dbReference>
<dbReference type="FunFam" id="2.70.160.11:FF:000045">
    <property type="entry name" value="Protein arginine N-methyltransferase 9"/>
    <property type="match status" value="1"/>
</dbReference>
<dbReference type="Gene3D" id="2.70.160.11">
    <property type="entry name" value="Hnrnp arginine n-methyltransferase1"/>
    <property type="match status" value="2"/>
</dbReference>
<dbReference type="Gene3D" id="1.25.40.10">
    <property type="entry name" value="Tetratricopeptide repeat domain"/>
    <property type="match status" value="1"/>
</dbReference>
<dbReference type="Gene3D" id="3.40.50.150">
    <property type="entry name" value="Vaccinia Virus protein VP39"/>
    <property type="match status" value="2"/>
</dbReference>
<dbReference type="InterPro" id="IPR025799">
    <property type="entry name" value="Arg_MeTrfase"/>
</dbReference>
<dbReference type="InterPro" id="IPR055135">
    <property type="entry name" value="PRMT_dom"/>
</dbReference>
<dbReference type="InterPro" id="IPR029063">
    <property type="entry name" value="SAM-dependent_MTases_sf"/>
</dbReference>
<dbReference type="InterPro" id="IPR011990">
    <property type="entry name" value="TPR-like_helical_dom_sf"/>
</dbReference>
<dbReference type="InterPro" id="IPR019734">
    <property type="entry name" value="TPR_rpt"/>
</dbReference>
<dbReference type="PANTHER" id="PTHR11006">
    <property type="entry name" value="PROTEIN ARGININE N-METHYLTRANSFERASE"/>
    <property type="match status" value="1"/>
</dbReference>
<dbReference type="PANTHER" id="PTHR11006:SF60">
    <property type="entry name" value="PROTEIN ARGININE N-METHYLTRANSFERASE 9"/>
    <property type="match status" value="1"/>
</dbReference>
<dbReference type="Pfam" id="PF06325">
    <property type="entry name" value="PrmA"/>
    <property type="match status" value="1"/>
</dbReference>
<dbReference type="Pfam" id="PF22528">
    <property type="entry name" value="PRMT_C"/>
    <property type="match status" value="2"/>
</dbReference>
<dbReference type="SUPFAM" id="SSF53335">
    <property type="entry name" value="S-adenosyl-L-methionine-dependent methyltransferases"/>
    <property type="match status" value="2"/>
</dbReference>
<dbReference type="SUPFAM" id="SSF48452">
    <property type="entry name" value="TPR-like"/>
    <property type="match status" value="1"/>
</dbReference>
<dbReference type="PROSITE" id="PS51678">
    <property type="entry name" value="SAM_MT_PRMT"/>
    <property type="match status" value="2"/>
</dbReference>
<dbReference type="PROSITE" id="PS50005">
    <property type="entry name" value="TPR"/>
    <property type="match status" value="2"/>
</dbReference>
<dbReference type="PROSITE" id="PS50293">
    <property type="entry name" value="TPR_REGION"/>
    <property type="match status" value="1"/>
</dbReference>
<comment type="function">
    <text evidence="1">Arginine methyltransferase that can both catalyze the formation of omega-N monomethylarginine (MMA) and symmetrical dimethylarginine (sDMA).</text>
</comment>
<comment type="catalytic activity">
    <reaction evidence="1">
        <text>L-arginyl-[protein] + 2 S-adenosyl-L-methionine = N(omega),N(omega)'-dimethyl-L-arginyl-[protein] + 2 S-adenosyl-L-homocysteine + 2 H(+)</text>
        <dbReference type="Rhea" id="RHEA:48108"/>
        <dbReference type="Rhea" id="RHEA-COMP:10532"/>
        <dbReference type="Rhea" id="RHEA-COMP:11992"/>
        <dbReference type="ChEBI" id="CHEBI:15378"/>
        <dbReference type="ChEBI" id="CHEBI:29965"/>
        <dbReference type="ChEBI" id="CHEBI:57856"/>
        <dbReference type="ChEBI" id="CHEBI:59789"/>
        <dbReference type="ChEBI" id="CHEBI:88221"/>
        <dbReference type="EC" id="2.1.1.320"/>
    </reaction>
</comment>
<comment type="subcellular location">
    <subcellularLocation>
        <location evidence="1">Cytoplasm</location>
    </subcellularLocation>
</comment>
<comment type="similarity">
    <text evidence="2">Belongs to the class I-like SAM-binding methyltransferase superfamily. Protein arginine N-methyltransferase family.</text>
</comment>